<proteinExistence type="inferred from homology"/>
<protein>
    <recommendedName>
        <fullName>Putative histidine permease</fullName>
    </recommendedName>
</protein>
<comment type="subcellular location">
    <subcellularLocation>
        <location evidence="2">Cell membrane</location>
        <topology evidence="2">Multi-pass membrane protein</topology>
    </subcellularLocation>
</comment>
<comment type="similarity">
    <text evidence="2">Belongs to the amino acid-polyamine-organocation (APC) superfamily.</text>
</comment>
<keyword id="KW-0029">Amino-acid transport</keyword>
<keyword id="KW-1003">Cell membrane</keyword>
<keyword id="KW-0472">Membrane</keyword>
<keyword id="KW-1185">Reference proteome</keyword>
<keyword id="KW-0812">Transmembrane</keyword>
<keyword id="KW-1133">Transmembrane helix</keyword>
<keyword id="KW-0813">Transport</keyword>
<accession>P42087</accession>
<name>HUTM_BACSU</name>
<reference key="1">
    <citation type="journal article" date="1995" name="Microbiology">
        <title>Cloning and sequencing of a 29 kb region of the Bacillus subtilis genome containing the hut and wapA loci.</title>
        <authorList>
            <person name="Yoshida K."/>
            <person name="Sano H."/>
            <person name="Seki S."/>
            <person name="Oda M."/>
            <person name="Fujimura M."/>
            <person name="Fujita Y."/>
        </authorList>
    </citation>
    <scope>NUCLEOTIDE SEQUENCE [GENOMIC DNA]</scope>
    <source>
        <strain>168 / BGSC1A1</strain>
    </source>
</reference>
<reference key="2">
    <citation type="journal article" date="1997" name="Nature">
        <title>The complete genome sequence of the Gram-positive bacterium Bacillus subtilis.</title>
        <authorList>
            <person name="Kunst F."/>
            <person name="Ogasawara N."/>
            <person name="Moszer I."/>
            <person name="Albertini A.M."/>
            <person name="Alloni G."/>
            <person name="Azevedo V."/>
            <person name="Bertero M.G."/>
            <person name="Bessieres P."/>
            <person name="Bolotin A."/>
            <person name="Borchert S."/>
            <person name="Borriss R."/>
            <person name="Boursier L."/>
            <person name="Brans A."/>
            <person name="Braun M."/>
            <person name="Brignell S.C."/>
            <person name="Bron S."/>
            <person name="Brouillet S."/>
            <person name="Bruschi C.V."/>
            <person name="Caldwell B."/>
            <person name="Capuano V."/>
            <person name="Carter N.M."/>
            <person name="Choi S.-K."/>
            <person name="Codani J.-J."/>
            <person name="Connerton I.F."/>
            <person name="Cummings N.J."/>
            <person name="Daniel R.A."/>
            <person name="Denizot F."/>
            <person name="Devine K.M."/>
            <person name="Duesterhoeft A."/>
            <person name="Ehrlich S.D."/>
            <person name="Emmerson P.T."/>
            <person name="Entian K.-D."/>
            <person name="Errington J."/>
            <person name="Fabret C."/>
            <person name="Ferrari E."/>
            <person name="Foulger D."/>
            <person name="Fritz C."/>
            <person name="Fujita M."/>
            <person name="Fujita Y."/>
            <person name="Fuma S."/>
            <person name="Galizzi A."/>
            <person name="Galleron N."/>
            <person name="Ghim S.-Y."/>
            <person name="Glaser P."/>
            <person name="Goffeau A."/>
            <person name="Golightly E.J."/>
            <person name="Grandi G."/>
            <person name="Guiseppi G."/>
            <person name="Guy B.J."/>
            <person name="Haga K."/>
            <person name="Haiech J."/>
            <person name="Harwood C.R."/>
            <person name="Henaut A."/>
            <person name="Hilbert H."/>
            <person name="Holsappel S."/>
            <person name="Hosono S."/>
            <person name="Hullo M.-F."/>
            <person name="Itaya M."/>
            <person name="Jones L.-M."/>
            <person name="Joris B."/>
            <person name="Karamata D."/>
            <person name="Kasahara Y."/>
            <person name="Klaerr-Blanchard M."/>
            <person name="Klein C."/>
            <person name="Kobayashi Y."/>
            <person name="Koetter P."/>
            <person name="Koningstein G."/>
            <person name="Krogh S."/>
            <person name="Kumano M."/>
            <person name="Kurita K."/>
            <person name="Lapidus A."/>
            <person name="Lardinois S."/>
            <person name="Lauber J."/>
            <person name="Lazarevic V."/>
            <person name="Lee S.-M."/>
            <person name="Levine A."/>
            <person name="Liu H."/>
            <person name="Masuda S."/>
            <person name="Mauel C."/>
            <person name="Medigue C."/>
            <person name="Medina N."/>
            <person name="Mellado R.P."/>
            <person name="Mizuno M."/>
            <person name="Moestl D."/>
            <person name="Nakai S."/>
            <person name="Noback M."/>
            <person name="Noone D."/>
            <person name="O'Reilly M."/>
            <person name="Ogawa K."/>
            <person name="Ogiwara A."/>
            <person name="Oudega B."/>
            <person name="Park S.-H."/>
            <person name="Parro V."/>
            <person name="Pohl T.M."/>
            <person name="Portetelle D."/>
            <person name="Porwollik S."/>
            <person name="Prescott A.M."/>
            <person name="Presecan E."/>
            <person name="Pujic P."/>
            <person name="Purnelle B."/>
            <person name="Rapoport G."/>
            <person name="Rey M."/>
            <person name="Reynolds S."/>
            <person name="Rieger M."/>
            <person name="Rivolta C."/>
            <person name="Rocha E."/>
            <person name="Roche B."/>
            <person name="Rose M."/>
            <person name="Sadaie Y."/>
            <person name="Sato T."/>
            <person name="Scanlan E."/>
            <person name="Schleich S."/>
            <person name="Schroeter R."/>
            <person name="Scoffone F."/>
            <person name="Sekiguchi J."/>
            <person name="Sekowska A."/>
            <person name="Seror S.J."/>
            <person name="Serror P."/>
            <person name="Shin B.-S."/>
            <person name="Soldo B."/>
            <person name="Sorokin A."/>
            <person name="Tacconi E."/>
            <person name="Takagi T."/>
            <person name="Takahashi H."/>
            <person name="Takemaru K."/>
            <person name="Takeuchi M."/>
            <person name="Tamakoshi A."/>
            <person name="Tanaka T."/>
            <person name="Terpstra P."/>
            <person name="Tognoni A."/>
            <person name="Tosato V."/>
            <person name="Uchiyama S."/>
            <person name="Vandenbol M."/>
            <person name="Vannier F."/>
            <person name="Vassarotti A."/>
            <person name="Viari A."/>
            <person name="Wambutt R."/>
            <person name="Wedler E."/>
            <person name="Wedler H."/>
            <person name="Weitzenegger T."/>
            <person name="Winters P."/>
            <person name="Wipat A."/>
            <person name="Yamamoto H."/>
            <person name="Yamane K."/>
            <person name="Yasumoto K."/>
            <person name="Yata K."/>
            <person name="Yoshida K."/>
            <person name="Yoshikawa H.-F."/>
            <person name="Zumstein E."/>
            <person name="Yoshikawa H."/>
            <person name="Danchin A."/>
        </authorList>
    </citation>
    <scope>NUCLEOTIDE SEQUENCE [LARGE SCALE GENOMIC DNA]</scope>
    <source>
        <strain>168</strain>
    </source>
</reference>
<reference key="3">
    <citation type="journal article" date="2009" name="Microbiology">
        <title>From a consortium sequence to a unified sequence: the Bacillus subtilis 168 reference genome a decade later.</title>
        <authorList>
            <person name="Barbe V."/>
            <person name="Cruveiller S."/>
            <person name="Kunst F."/>
            <person name="Lenoble P."/>
            <person name="Meurice G."/>
            <person name="Sekowska A."/>
            <person name="Vallenet D."/>
            <person name="Wang T."/>
            <person name="Moszer I."/>
            <person name="Medigue C."/>
            <person name="Danchin A."/>
        </authorList>
    </citation>
    <scope>SEQUENCE REVISION TO 74-75</scope>
</reference>
<reference key="4">
    <citation type="journal article" date="1996" name="J. Bacteriol.">
        <title>Dra-nupC-pdp operon of Bacillus subtilis: nucleotide sequence, induction by deoxyribonucleosides, and transcriptional regulation by the deoR-encoded DeoR repressor protein.</title>
        <authorList>
            <person name="Saxild H.H."/>
            <person name="Andersen L.N."/>
            <person name="Hammer K."/>
        </authorList>
    </citation>
    <scope>NUCLEOTIDE SEQUENCE [GENOMIC DNA] OF 360-475</scope>
    <source>
        <strain>168</strain>
    </source>
</reference>
<reference key="5">
    <citation type="journal article" date="1995" name="DNA Res.">
        <title>Cloning and sequencing of a 23-kb region of the Bacillus subtilis genome between the iol and hut operons.</title>
        <authorList>
            <person name="Yoshida K."/>
            <person name="Fujimyra M."/>
            <person name="Yanai N."/>
            <person name="Fujita Y."/>
        </authorList>
    </citation>
    <scope>NUCLEOTIDE SEQUENCE [GENOMIC DNA] OF 361-475</scope>
    <source>
        <strain>168 / BGSC1A1</strain>
    </source>
</reference>
<evidence type="ECO:0000255" key="1"/>
<evidence type="ECO:0000305" key="2"/>
<sequence length="475" mass="51624">MNLQENSSQQLKRTMKSRHLFMISLGGVIGTGLFLSTGYTLHQAGPGGTILAYVIGGLMMYLVMQCLGELSVAMPVTGSFQKYATTFIGPSTGFMVGIMYWINWVVTVGSEFTASGILMQRWFPDSSVWMWSAIFAALLFICNAFSVKLFAETEFWFSSVKIVTIILFIILGGAAMFGLISLNGTADAPMLSNFTDHGGLFPNGFLAVFIAMISVSFAFSGTELIGVTAGESANPQKDIPRSIRNVAWRTVIFFIGAVFILSGLISWKDAGVIESPFVAVFAEIGIPYAADIMNFVILTALLSVANSGLYASTRMMWSLANENMISSRFKKVTSKGIPLNALMISMAVSCLSLVSSIVAPGTVYVVMVAIAGFAGVVVWMSIALSQLLFRKRFLKKGGDVKDLTFRTPLYPLMPIAALLLCSASCIGLAFDPNQRIALFCGVPCIILCYLIYHFKRNVTKAKKISQEEYPADHIL</sequence>
<organism>
    <name type="scientific">Bacillus subtilis (strain 168)</name>
    <dbReference type="NCBI Taxonomy" id="224308"/>
    <lineage>
        <taxon>Bacteria</taxon>
        <taxon>Bacillati</taxon>
        <taxon>Bacillota</taxon>
        <taxon>Bacilli</taxon>
        <taxon>Bacillales</taxon>
        <taxon>Bacillaceae</taxon>
        <taxon>Bacillus</taxon>
    </lineage>
</organism>
<gene>
    <name type="primary">hutM</name>
    <name type="ordered locus">BSU39390</name>
    <name type="ORF">EE57D</name>
</gene>
<dbReference type="EMBL" id="D31856">
    <property type="protein sequence ID" value="BAA06640.1"/>
    <property type="molecule type" value="Genomic_DNA"/>
</dbReference>
<dbReference type="EMBL" id="AL009126">
    <property type="protein sequence ID" value="CAB15975.2"/>
    <property type="molecule type" value="Genomic_DNA"/>
</dbReference>
<dbReference type="EMBL" id="X82174">
    <property type="status" value="NOT_ANNOTATED_CDS"/>
    <property type="molecule type" value="Genomic_DNA"/>
</dbReference>
<dbReference type="EMBL" id="D45912">
    <property type="protein sequence ID" value="BAA08340.1"/>
    <property type="molecule type" value="Genomic_DNA"/>
</dbReference>
<dbReference type="PIR" id="E69643">
    <property type="entry name" value="E69643"/>
</dbReference>
<dbReference type="RefSeq" id="NP_391818.2">
    <property type="nucleotide sequence ID" value="NC_000964.3"/>
</dbReference>
<dbReference type="RefSeq" id="WP_003227134.1">
    <property type="nucleotide sequence ID" value="NZ_OZ025638.1"/>
</dbReference>
<dbReference type="SMR" id="P42087"/>
<dbReference type="FunCoup" id="P42087">
    <property type="interactions" value="73"/>
</dbReference>
<dbReference type="STRING" id="224308.BSU39390"/>
<dbReference type="PaxDb" id="224308-BSU39390"/>
<dbReference type="EnsemblBacteria" id="CAB15975">
    <property type="protein sequence ID" value="CAB15975"/>
    <property type="gene ID" value="BSU_39390"/>
</dbReference>
<dbReference type="GeneID" id="938565"/>
<dbReference type="KEGG" id="bsu:BSU39390"/>
<dbReference type="PATRIC" id="fig|224308.179.peg.4264"/>
<dbReference type="eggNOG" id="COG0833">
    <property type="taxonomic scope" value="Bacteria"/>
</dbReference>
<dbReference type="InParanoid" id="P42087"/>
<dbReference type="OrthoDB" id="9780162at2"/>
<dbReference type="PhylomeDB" id="P42087"/>
<dbReference type="BioCyc" id="BSUB:BSU39390-MONOMER"/>
<dbReference type="Proteomes" id="UP000001570">
    <property type="component" value="Chromosome"/>
</dbReference>
<dbReference type="GO" id="GO:0016020">
    <property type="term" value="C:membrane"/>
    <property type="evidence" value="ECO:0000318"/>
    <property type="project" value="GO_Central"/>
</dbReference>
<dbReference type="GO" id="GO:0005886">
    <property type="term" value="C:plasma membrane"/>
    <property type="evidence" value="ECO:0007669"/>
    <property type="project" value="UniProtKB-SubCell"/>
</dbReference>
<dbReference type="GO" id="GO:0015171">
    <property type="term" value="F:amino acid transmembrane transporter activity"/>
    <property type="evidence" value="ECO:0000318"/>
    <property type="project" value="GO_Central"/>
</dbReference>
<dbReference type="GO" id="GO:0003333">
    <property type="term" value="P:amino acid transmembrane transport"/>
    <property type="evidence" value="ECO:0000318"/>
    <property type="project" value="GO_Central"/>
</dbReference>
<dbReference type="FunFam" id="1.20.1740.10:FF:000001">
    <property type="entry name" value="Amino acid permease"/>
    <property type="match status" value="1"/>
</dbReference>
<dbReference type="Gene3D" id="1.20.1740.10">
    <property type="entry name" value="Amino acid/polyamine transporter I"/>
    <property type="match status" value="1"/>
</dbReference>
<dbReference type="InterPro" id="IPR004841">
    <property type="entry name" value="AA-permease/SLC12A_dom"/>
</dbReference>
<dbReference type="InterPro" id="IPR004840">
    <property type="entry name" value="Amino_acid_permease_CS"/>
</dbReference>
<dbReference type="PANTHER" id="PTHR43495">
    <property type="entry name" value="GABA PERMEASE"/>
    <property type="match status" value="1"/>
</dbReference>
<dbReference type="PANTHER" id="PTHR43495:SF5">
    <property type="entry name" value="GAMMA-AMINOBUTYRIC ACID PERMEASE"/>
    <property type="match status" value="1"/>
</dbReference>
<dbReference type="Pfam" id="PF00324">
    <property type="entry name" value="AA_permease"/>
    <property type="match status" value="1"/>
</dbReference>
<dbReference type="PIRSF" id="PIRSF006060">
    <property type="entry name" value="AA_transporter"/>
    <property type="match status" value="1"/>
</dbReference>
<dbReference type="PROSITE" id="PS00218">
    <property type="entry name" value="AMINO_ACID_PERMEASE_1"/>
    <property type="match status" value="1"/>
</dbReference>
<feature type="chain" id="PRO_0000054203" description="Putative histidine permease">
    <location>
        <begin position="1"/>
        <end position="475"/>
    </location>
</feature>
<feature type="transmembrane region" description="Helical" evidence="1">
    <location>
        <begin position="20"/>
        <end position="40"/>
    </location>
</feature>
<feature type="transmembrane region" description="Helical" evidence="1">
    <location>
        <begin position="44"/>
        <end position="64"/>
    </location>
</feature>
<feature type="transmembrane region" description="Helical" evidence="1">
    <location>
        <begin position="87"/>
        <end position="107"/>
    </location>
</feature>
<feature type="transmembrane region" description="Helical" evidence="1">
    <location>
        <begin position="127"/>
        <end position="147"/>
    </location>
</feature>
<feature type="transmembrane region" description="Helical" evidence="1">
    <location>
        <begin position="162"/>
        <end position="182"/>
    </location>
</feature>
<feature type="transmembrane region" description="Helical" evidence="1">
    <location>
        <begin position="199"/>
        <end position="219"/>
    </location>
</feature>
<feature type="transmembrane region" description="Helical" evidence="1">
    <location>
        <begin position="246"/>
        <end position="266"/>
    </location>
</feature>
<feature type="transmembrane region" description="Helical" evidence="1">
    <location>
        <begin position="277"/>
        <end position="297"/>
    </location>
</feature>
<feature type="transmembrane region" description="Helical" evidence="1">
    <location>
        <begin position="341"/>
        <end position="361"/>
    </location>
</feature>
<feature type="transmembrane region" description="Helical" evidence="1">
    <location>
        <begin position="363"/>
        <end position="383"/>
    </location>
</feature>
<feature type="transmembrane region" description="Helical" evidence="1">
    <location>
        <begin position="410"/>
        <end position="430"/>
    </location>
</feature>
<feature type="transmembrane region" description="Helical" evidence="1">
    <location>
        <begin position="434"/>
        <end position="454"/>
    </location>
</feature>
<feature type="sequence conflict" description="In Ref. 1; BAA06640." evidence="2" ref="1">
    <original>MP</original>
    <variation>NA</variation>
    <location>
        <begin position="74"/>
        <end position="75"/>
    </location>
</feature>